<keyword id="KW-0002">3D-structure</keyword>
<keyword id="KW-0007">Acetylation</keyword>
<keyword id="KW-0025">Alternative splicing</keyword>
<keyword id="KW-0067">ATP-binding</keyword>
<keyword id="KW-0156">Chromatin regulator</keyword>
<keyword id="KW-0158">Chromosome</keyword>
<keyword id="KW-0227">DNA damage</keyword>
<keyword id="KW-0234">DNA repair</keyword>
<keyword id="KW-0238">DNA-binding</keyword>
<keyword id="KW-0038">Ectodermal dysplasia</keyword>
<keyword id="KW-0347">Helicase</keyword>
<keyword id="KW-0378">Hydrolase</keyword>
<keyword id="KW-1017">Isopeptide bond</keyword>
<keyword id="KW-0547">Nucleotide-binding</keyword>
<keyword id="KW-0539">Nucleus</keyword>
<keyword id="KW-1007">Palmoplantar keratoderma</keyword>
<keyword id="KW-0597">Phosphoprotein</keyword>
<keyword id="KW-1267">Proteomics identification</keyword>
<keyword id="KW-1185">Reference proteome</keyword>
<keyword id="KW-0677">Repeat</keyword>
<keyword id="KW-0832">Ubl conjugation</keyword>
<dbReference type="EC" id="3.6.4.12" evidence="11"/>
<dbReference type="EMBL" id="AY008271">
    <property type="protein sequence ID" value="AAG16639.1"/>
    <property type="molecule type" value="mRNA"/>
</dbReference>
<dbReference type="EMBL" id="AB032948">
    <property type="protein sequence ID" value="BAA86436.2"/>
    <property type="status" value="ALT_INIT"/>
    <property type="molecule type" value="mRNA"/>
</dbReference>
<dbReference type="EMBL" id="AK023990">
    <property type="protein sequence ID" value="BAB14759.1"/>
    <property type="status" value="ALT_INIT"/>
    <property type="molecule type" value="mRNA"/>
</dbReference>
<dbReference type="EMBL" id="AK027490">
    <property type="protein sequence ID" value="BAB55150.1"/>
    <property type="molecule type" value="mRNA"/>
</dbReference>
<dbReference type="EMBL" id="AK301668">
    <property type="protein sequence ID" value="BAH13535.1"/>
    <property type="molecule type" value="mRNA"/>
</dbReference>
<dbReference type="EMBL" id="AC096746">
    <property type="status" value="NOT_ANNOTATED_CDS"/>
    <property type="molecule type" value="Genomic_DNA"/>
</dbReference>
<dbReference type="EMBL" id="BC017953">
    <property type="protein sequence ID" value="AAH17953.1"/>
    <property type="status" value="ALT_SEQ"/>
    <property type="molecule type" value="mRNA"/>
</dbReference>
<dbReference type="EMBL" id="BC045534">
    <property type="protein sequence ID" value="AAH45534.1"/>
    <property type="molecule type" value="mRNA"/>
</dbReference>
<dbReference type="EMBL" id="AL359929">
    <property type="protein sequence ID" value="CAB95769.1"/>
    <property type="molecule type" value="mRNA"/>
</dbReference>
<dbReference type="EMBL" id="AL512768">
    <property type="protein sequence ID" value="CAC21685.1"/>
    <property type="molecule type" value="mRNA"/>
</dbReference>
<dbReference type="CCDS" id="CCDS3639.1">
    <molecule id="Q9H4L7-1"/>
</dbReference>
<dbReference type="CCDS" id="CCDS47101.1">
    <molecule id="Q9H4L7-2"/>
</dbReference>
<dbReference type="CCDS" id="CCDS58914.1">
    <molecule id="Q9H4L7-3"/>
</dbReference>
<dbReference type="RefSeq" id="NP_001121901.1">
    <molecule id="Q9H4L7-2"/>
    <property type="nucleotide sequence ID" value="NM_001128429.3"/>
</dbReference>
<dbReference type="RefSeq" id="NP_001121902.1">
    <molecule id="Q9H4L7-2"/>
    <property type="nucleotide sequence ID" value="NM_001128430.2"/>
</dbReference>
<dbReference type="RefSeq" id="NP_001241878.1">
    <molecule id="Q9H4L7-3"/>
    <property type="nucleotide sequence ID" value="NM_001254949.2"/>
</dbReference>
<dbReference type="RefSeq" id="NP_001362784.1">
    <molecule id="Q9H4L7-1"/>
    <property type="nucleotide sequence ID" value="NM_001375855.1"/>
</dbReference>
<dbReference type="RefSeq" id="NP_001362785.1">
    <molecule id="Q9H4L7-1"/>
    <property type="nucleotide sequence ID" value="NM_001375856.1"/>
</dbReference>
<dbReference type="RefSeq" id="NP_064544.2">
    <molecule id="Q9H4L7-1"/>
    <property type="nucleotide sequence ID" value="NM_020159.5"/>
</dbReference>
<dbReference type="RefSeq" id="XP_016863952.1">
    <property type="nucleotide sequence ID" value="XM_017008463.1"/>
</dbReference>
<dbReference type="RefSeq" id="XP_024309922.1">
    <molecule id="Q9H4L7-2"/>
    <property type="nucleotide sequence ID" value="XM_024454154.2"/>
</dbReference>
<dbReference type="PDB" id="6H3A">
    <property type="method" value="X-ray"/>
    <property type="resolution" value="5.50 A"/>
    <property type="chains" value="B/D=95-347"/>
</dbReference>
<dbReference type="PDB" id="6QU1">
    <property type="method" value="X-ray"/>
    <property type="resolution" value="3.70 A"/>
    <property type="chains" value="D=151-198"/>
</dbReference>
<dbReference type="PDB" id="7Z36">
    <property type="method" value="X-ray"/>
    <property type="resolution" value="2.80 A"/>
    <property type="chains" value="C/S=148-198"/>
</dbReference>
<dbReference type="PDBsum" id="6H3A"/>
<dbReference type="PDBsum" id="6QU1"/>
<dbReference type="PDBsum" id="7Z36"/>
<dbReference type="SMR" id="Q9H4L7"/>
<dbReference type="BioGRID" id="121244">
    <property type="interactions" value="197"/>
</dbReference>
<dbReference type="FunCoup" id="Q9H4L7">
    <property type="interactions" value="3843"/>
</dbReference>
<dbReference type="IntAct" id="Q9H4L7">
    <property type="interactions" value="52"/>
</dbReference>
<dbReference type="MINT" id="Q9H4L7"/>
<dbReference type="STRING" id="9606.ENSP00000351947"/>
<dbReference type="GlyGen" id="Q9H4L7">
    <property type="glycosylation" value="1 site, 1 O-linked glycan (1 site)"/>
</dbReference>
<dbReference type="iPTMnet" id="Q9H4L7"/>
<dbReference type="MetOSite" id="Q9H4L7"/>
<dbReference type="PhosphoSitePlus" id="Q9H4L7"/>
<dbReference type="BioMuta" id="SMARCAD1"/>
<dbReference type="DMDM" id="306526240"/>
<dbReference type="jPOST" id="Q9H4L7"/>
<dbReference type="MassIVE" id="Q9H4L7"/>
<dbReference type="PaxDb" id="9606-ENSP00000351947"/>
<dbReference type="PeptideAtlas" id="Q9H4L7"/>
<dbReference type="ProteomicsDB" id="80860">
    <molecule id="Q9H4L7-1"/>
</dbReference>
<dbReference type="ProteomicsDB" id="80861">
    <molecule id="Q9H4L7-2"/>
</dbReference>
<dbReference type="ProteomicsDB" id="80862">
    <molecule id="Q9H4L7-3"/>
</dbReference>
<dbReference type="Pumba" id="Q9H4L7"/>
<dbReference type="Antibodypedia" id="14709">
    <property type="antibodies" value="135 antibodies from 27 providers"/>
</dbReference>
<dbReference type="DNASU" id="56916"/>
<dbReference type="Ensembl" id="ENST00000354268.9">
    <molecule id="Q9H4L7-1"/>
    <property type="protein sequence ID" value="ENSP00000346217.4"/>
    <property type="gene ID" value="ENSG00000163104.18"/>
</dbReference>
<dbReference type="Ensembl" id="ENST00000359052.8">
    <molecule id="Q9H4L7-2"/>
    <property type="protein sequence ID" value="ENSP00000351947.4"/>
    <property type="gene ID" value="ENSG00000163104.18"/>
</dbReference>
<dbReference type="Ensembl" id="ENST00000457823.6">
    <molecule id="Q9H4L7-2"/>
    <property type="protein sequence ID" value="ENSP00000415576.2"/>
    <property type="gene ID" value="ENSG00000163104.18"/>
</dbReference>
<dbReference type="Ensembl" id="ENST00000509418.1">
    <molecule id="Q9H4L7-3"/>
    <property type="protein sequence ID" value="ENSP00000423286.1"/>
    <property type="gene ID" value="ENSG00000163104.18"/>
</dbReference>
<dbReference type="GeneID" id="56916"/>
<dbReference type="KEGG" id="hsa:56916"/>
<dbReference type="MANE-Select" id="ENST00000354268.9">
    <property type="protein sequence ID" value="ENSP00000346217.4"/>
    <property type="RefSeq nucleotide sequence ID" value="NM_020159.5"/>
    <property type="RefSeq protein sequence ID" value="NP_064544.2"/>
</dbReference>
<dbReference type="UCSC" id="uc003htb.5">
    <molecule id="Q9H4L7-1"/>
    <property type="organism name" value="human"/>
</dbReference>
<dbReference type="AGR" id="HGNC:18398"/>
<dbReference type="CTD" id="56916"/>
<dbReference type="DisGeNET" id="56916"/>
<dbReference type="GeneCards" id="SMARCAD1"/>
<dbReference type="HGNC" id="HGNC:18398">
    <property type="gene designation" value="SMARCAD1"/>
</dbReference>
<dbReference type="HPA" id="ENSG00000163104">
    <property type="expression patterns" value="Low tissue specificity"/>
</dbReference>
<dbReference type="MalaCards" id="SMARCAD1"/>
<dbReference type="MIM" id="129200">
    <property type="type" value="phenotype"/>
</dbReference>
<dbReference type="MIM" id="136000">
    <property type="type" value="phenotype"/>
</dbReference>
<dbReference type="MIM" id="181600">
    <property type="type" value="phenotype"/>
</dbReference>
<dbReference type="MIM" id="612761">
    <property type="type" value="gene"/>
</dbReference>
<dbReference type="neXtProt" id="NX_Q9H4L7"/>
<dbReference type="OpenTargets" id="ENSG00000163104"/>
<dbReference type="Orphanet" id="1658">
    <property type="disease" value="Absence of fingerprints-congenital milia syndrome"/>
</dbReference>
<dbReference type="Orphanet" id="384">
    <property type="disease" value="Huriez syndrome"/>
</dbReference>
<dbReference type="Orphanet" id="289465">
    <property type="disease" value="Isolated congenital adermatoglyphia"/>
</dbReference>
<dbReference type="PharmGKB" id="PA134954731"/>
<dbReference type="VEuPathDB" id="HostDB:ENSG00000163104"/>
<dbReference type="eggNOG" id="KOG0389">
    <property type="taxonomic scope" value="Eukaryota"/>
</dbReference>
<dbReference type="GeneTree" id="ENSGT00910000144252"/>
<dbReference type="HOGENOM" id="CLU_000315_16_3_1"/>
<dbReference type="InParanoid" id="Q9H4L7"/>
<dbReference type="OMA" id="TIENWIG"/>
<dbReference type="OrthoDB" id="448448at2759"/>
<dbReference type="PAN-GO" id="Q9H4L7">
    <property type="GO annotations" value="4 GO annotations based on evolutionary models"/>
</dbReference>
<dbReference type="PhylomeDB" id="Q9H4L7"/>
<dbReference type="TreeFam" id="TF105768"/>
<dbReference type="PathwayCommons" id="Q9H4L7"/>
<dbReference type="SignaLink" id="Q9H4L7"/>
<dbReference type="SIGNOR" id="Q9H4L7"/>
<dbReference type="BioGRID-ORCS" id="56916">
    <property type="hits" value="13 hits in 1169 CRISPR screens"/>
</dbReference>
<dbReference type="ChiTaRS" id="SMARCAD1">
    <property type="organism name" value="human"/>
</dbReference>
<dbReference type="GeneWiki" id="SMARCAD1"/>
<dbReference type="GenomeRNAi" id="56916"/>
<dbReference type="Pharos" id="Q9H4L7">
    <property type="development level" value="Tbio"/>
</dbReference>
<dbReference type="PRO" id="PR:Q9H4L7"/>
<dbReference type="Proteomes" id="UP000005640">
    <property type="component" value="Chromosome 4"/>
</dbReference>
<dbReference type="RNAct" id="Q9H4L7">
    <property type="molecule type" value="protein"/>
</dbReference>
<dbReference type="Bgee" id="ENSG00000163104">
    <property type="expression patterns" value="Expressed in adrenal tissue and 175 other cell types or tissues"/>
</dbReference>
<dbReference type="ExpressionAtlas" id="Q9H4L7">
    <property type="expression patterns" value="baseline and differential"/>
</dbReference>
<dbReference type="GO" id="GO:0000785">
    <property type="term" value="C:chromatin"/>
    <property type="evidence" value="ECO:0000318"/>
    <property type="project" value="GO_Central"/>
</dbReference>
<dbReference type="GO" id="GO:0000792">
    <property type="term" value="C:heterochromatin"/>
    <property type="evidence" value="ECO:0000250"/>
    <property type="project" value="UniProtKB"/>
</dbReference>
<dbReference type="GO" id="GO:0043596">
    <property type="term" value="C:nuclear replication fork"/>
    <property type="evidence" value="ECO:0000314"/>
    <property type="project" value="UniProtKB"/>
</dbReference>
<dbReference type="GO" id="GO:0005654">
    <property type="term" value="C:nucleoplasm"/>
    <property type="evidence" value="ECO:0000314"/>
    <property type="project" value="HPA"/>
</dbReference>
<dbReference type="GO" id="GO:0005634">
    <property type="term" value="C:nucleus"/>
    <property type="evidence" value="ECO:0000318"/>
    <property type="project" value="GO_Central"/>
</dbReference>
<dbReference type="GO" id="GO:0035861">
    <property type="term" value="C:site of double-strand break"/>
    <property type="evidence" value="ECO:0000314"/>
    <property type="project" value="UniProtKB"/>
</dbReference>
<dbReference type="GO" id="GO:0005524">
    <property type="term" value="F:ATP binding"/>
    <property type="evidence" value="ECO:0007669"/>
    <property type="project" value="UniProtKB-KW"/>
</dbReference>
<dbReference type="GO" id="GO:0016887">
    <property type="term" value="F:ATP hydrolysis activity"/>
    <property type="evidence" value="ECO:0007669"/>
    <property type="project" value="RHEA"/>
</dbReference>
<dbReference type="GO" id="GO:0140658">
    <property type="term" value="F:ATP-dependent chromatin remodeler activity"/>
    <property type="evidence" value="ECO:0000315"/>
    <property type="project" value="GO_Central"/>
</dbReference>
<dbReference type="GO" id="GO:0003682">
    <property type="term" value="F:chromatin binding"/>
    <property type="evidence" value="ECO:0000318"/>
    <property type="project" value="GO_Central"/>
</dbReference>
<dbReference type="GO" id="GO:0003677">
    <property type="term" value="F:DNA binding"/>
    <property type="evidence" value="ECO:0000314"/>
    <property type="project" value="UniProtKB"/>
</dbReference>
<dbReference type="GO" id="GO:0004386">
    <property type="term" value="F:helicase activity"/>
    <property type="evidence" value="ECO:0007669"/>
    <property type="project" value="UniProtKB-KW"/>
</dbReference>
<dbReference type="GO" id="GO:0140750">
    <property type="term" value="F:nucleosome array spacer activity"/>
    <property type="evidence" value="ECO:0000318"/>
    <property type="project" value="GO_Central"/>
</dbReference>
<dbReference type="GO" id="GO:0043130">
    <property type="term" value="F:ubiquitin binding"/>
    <property type="evidence" value="ECO:0007669"/>
    <property type="project" value="InterPro"/>
</dbReference>
<dbReference type="GO" id="GO:0006338">
    <property type="term" value="P:chromatin remodeling"/>
    <property type="evidence" value="ECO:0000315"/>
    <property type="project" value="GO_Central"/>
</dbReference>
<dbReference type="GO" id="GO:0051304">
    <property type="term" value="P:chromosome separation"/>
    <property type="evidence" value="ECO:0000315"/>
    <property type="project" value="UniProtKB"/>
</dbReference>
<dbReference type="GO" id="GO:0000729">
    <property type="term" value="P:DNA double-strand break processing"/>
    <property type="evidence" value="ECO:0000315"/>
    <property type="project" value="UniProtKB"/>
</dbReference>
<dbReference type="GO" id="GO:0045944">
    <property type="term" value="P:positive regulation of transcription by RNA polymerase II"/>
    <property type="evidence" value="ECO:0000318"/>
    <property type="project" value="GO_Central"/>
</dbReference>
<dbReference type="GO" id="GO:0000018">
    <property type="term" value="P:regulation of DNA recombination"/>
    <property type="evidence" value="ECO:0000270"/>
    <property type="project" value="UniProtKB"/>
</dbReference>
<dbReference type="CDD" id="cd17998">
    <property type="entry name" value="DEXHc_SMARCAD1"/>
    <property type="match status" value="1"/>
</dbReference>
<dbReference type="CDD" id="cd18793">
    <property type="entry name" value="SF2_C_SNF"/>
    <property type="match status" value="1"/>
</dbReference>
<dbReference type="FunFam" id="3.40.50.10810:FF:000014">
    <property type="entry name" value="SWI/SNF-related matrix-associated actin-dependent regulator of chromatin subfamily A containing DEAD/H box 1"/>
    <property type="match status" value="1"/>
</dbReference>
<dbReference type="FunFam" id="3.40.50.300:FF:000639">
    <property type="entry name" value="SWI/SNF-related matrix-associated actin-dependent regulator of chromatin subfamily A containing DEAD/H box 1 isoform X1"/>
    <property type="match status" value="1"/>
</dbReference>
<dbReference type="Gene3D" id="3.40.50.300">
    <property type="entry name" value="P-loop containing nucleotide triphosphate hydrolases"/>
    <property type="match status" value="1"/>
</dbReference>
<dbReference type="Gene3D" id="3.40.50.10810">
    <property type="entry name" value="Tandem AAA-ATPase domain"/>
    <property type="match status" value="1"/>
</dbReference>
<dbReference type="InterPro" id="IPR003892">
    <property type="entry name" value="CUE"/>
</dbReference>
<dbReference type="InterPro" id="IPR014001">
    <property type="entry name" value="Helicase_ATP-bd"/>
</dbReference>
<dbReference type="InterPro" id="IPR001650">
    <property type="entry name" value="Helicase_C-like"/>
</dbReference>
<dbReference type="InterPro" id="IPR027417">
    <property type="entry name" value="P-loop_NTPase"/>
</dbReference>
<dbReference type="InterPro" id="IPR038718">
    <property type="entry name" value="SNF2-like_sf"/>
</dbReference>
<dbReference type="InterPro" id="IPR049730">
    <property type="entry name" value="SNF2/RAD54-like_C"/>
</dbReference>
<dbReference type="InterPro" id="IPR000330">
    <property type="entry name" value="SNF2_N"/>
</dbReference>
<dbReference type="PANTHER" id="PTHR10799">
    <property type="entry name" value="SNF2/RAD54 HELICASE FAMILY"/>
    <property type="match status" value="1"/>
</dbReference>
<dbReference type="Pfam" id="PF00271">
    <property type="entry name" value="Helicase_C"/>
    <property type="match status" value="1"/>
</dbReference>
<dbReference type="Pfam" id="PF00176">
    <property type="entry name" value="SNF2-rel_dom"/>
    <property type="match status" value="1"/>
</dbReference>
<dbReference type="SMART" id="SM00487">
    <property type="entry name" value="DEXDc"/>
    <property type="match status" value="1"/>
</dbReference>
<dbReference type="SMART" id="SM00490">
    <property type="entry name" value="HELICc"/>
    <property type="match status" value="1"/>
</dbReference>
<dbReference type="SUPFAM" id="SSF52540">
    <property type="entry name" value="P-loop containing nucleoside triphosphate hydrolases"/>
    <property type="match status" value="2"/>
</dbReference>
<dbReference type="PROSITE" id="PS51140">
    <property type="entry name" value="CUE"/>
    <property type="match status" value="2"/>
</dbReference>
<dbReference type="PROSITE" id="PS51192">
    <property type="entry name" value="HELICASE_ATP_BIND_1"/>
    <property type="match status" value="1"/>
</dbReference>
<dbReference type="PROSITE" id="PS51194">
    <property type="entry name" value="HELICASE_CTER"/>
    <property type="match status" value="1"/>
</dbReference>
<comment type="function">
    <text evidence="9 11">DNA helicase that possesses intrinsic ATP-dependent nucleosome-remodeling activity and is both required for DNA repair and heterochromatin organization. Promotes DNA end resection of double-strand breaks (DSBs) following DNA damage: probably acts by weakening histone DNA interactions in nucleosomes flanking DSBs. Required for the restoration of heterochromatin organization after replication. Acts at replication sites to facilitate the maintenance of heterochromatin by directing H3 and H4 histones deacetylation, H3 'Lys-9' trimethylation (H3K9me3) and restoration of silencing.</text>
</comment>
<comment type="catalytic activity">
    <reaction evidence="11">
        <text>ATP + H2O = ADP + phosphate + H(+)</text>
        <dbReference type="Rhea" id="RHEA:13065"/>
        <dbReference type="ChEBI" id="CHEBI:15377"/>
        <dbReference type="ChEBI" id="CHEBI:15378"/>
        <dbReference type="ChEBI" id="CHEBI:30616"/>
        <dbReference type="ChEBI" id="CHEBI:43474"/>
        <dbReference type="ChEBI" id="CHEBI:456216"/>
        <dbReference type="EC" id="3.6.4.12"/>
    </reaction>
    <physiologicalReaction direction="left-to-right" evidence="23">
        <dbReference type="Rhea" id="RHEA:13066"/>
    </physiologicalReaction>
</comment>
<comment type="subunit">
    <text evidence="8 9">Binds to DNA preferentially in the vicinity of transcriptional start sites. Interacts with MSH2 and TRIM28. Part of a complex composed of TRIM28, HDAC1, HDAC2 and EHMT2. Interacts with PCNA.</text>
</comment>
<comment type="subcellular location">
    <subcellularLocation>
        <location evidence="8 9 11">Nucleus</location>
    </subcellularLocation>
    <subcellularLocation>
        <location evidence="8 9 11">Chromosome</location>
    </subcellularLocation>
    <text evidence="9 11">Colocalizes with PCNA at replication forks during S phase (PubMed:21549307). Recruited to double-strand breaks (DSBs) sites of DNA damage (PubMed:22960744).</text>
</comment>
<comment type="alternative products">
    <event type="alternative splicing"/>
    <isoform>
        <id>Q9H4L7-1</id>
        <name>1</name>
        <name>Long</name>
        <sequence type="displayed"/>
    </isoform>
    <isoform>
        <id>Q9H4L7-2</id>
        <name>2</name>
        <sequence type="described" ref="VSP_007104"/>
    </isoform>
    <isoform>
        <id>Q9H4L7-3</id>
        <name>3</name>
        <name>Short</name>
        <sequence type="described" ref="VSP_043110"/>
    </isoform>
</comment>
<comment type="tissue specificity">
    <text evidence="6 10 15">Isoform 1 is expressed ubiquitously. Isoform 3 is expressed mainly in skin and esophagus. Expressed in fibroblasts and keratinocytes (at protein level) (PubMed:29409814).</text>
</comment>
<comment type="disease" evidence="10 13">
    <disease id="DI-03267">
        <name>Adermatoglyphia</name>
        <acronym>ADERM</acronym>
        <description>An autosomal dominant condition characterized by the lack of epidermal ridges on the palms and soles, which results in the absence of fingerprints, and is associated with a reduced number of sweat gland openings and reduced sweating of palms and soles.</description>
        <dbReference type="MIM" id="136000"/>
    </disease>
    <text evidence="10 13">The disease is caused by variants affecting the gene represented in this entry. Splice site mutations causing aberrant splicing of skin-specific isoform 3 are likely to exert a loss-of-function effect and are involved in ADERM.</text>
</comment>
<comment type="disease" evidence="12 14">
    <disease id="DI-04977">
        <name>Basan syndrome</name>
        <acronym>BSNS</acronym>
        <description>An autosomal dominant form of adermatoglyphia associated with congenital facial milia, acral blistering, digital contractures, and nail abnormalities. Adermatoglyphia is defined by the lack of epidermal ridges on the palms and soles, which results in the absence of fingerprints.</description>
        <dbReference type="MIM" id="129200"/>
    </disease>
    <text evidence="12 14">The disease is caused by variants affecting the gene represented in this entry. Splice site mutations causing aberrant splicing of skin-specific isoform 3 are likely to exert a loss-of-function effect and are involved in BSNS.</text>
</comment>
<comment type="disease" evidence="15">
    <disease id="DI-05520">
        <name>Huriez syndrome</name>
        <acronym>HRZ</acronym>
        <description>An autosomal dominant syndrome characterized by atrophic fibrosis of the skin of the limbs, nail hypoplasia, and palmoplantar keratoderma. Malignant degeneration of affected skin resulting in aggressive squamous cell carcinoma and early metastasis formation is a distinctive feature of the syndrome.</description>
        <dbReference type="MIM" id="181600"/>
    </disease>
    <text>The disease is caused by variants affecting the gene represented in this entry.</text>
</comment>
<comment type="miscellaneous">
    <molecule>Isoform 3</molecule>
    <text evidence="22">Skin-specific.</text>
</comment>
<comment type="similarity">
    <text evidence="22">Belongs to the SNF2/RAD54 helicase family.</text>
</comment>
<comment type="sequence caution" evidence="22">
    <conflict type="miscellaneous discrepancy">
        <sequence resource="EMBL-CDS" id="AAH17953"/>
    </conflict>
    <text>Contaminating sequence. Potential poly-A sequence.</text>
</comment>
<comment type="sequence caution" evidence="22">
    <conflict type="erroneous initiation">
        <sequence resource="EMBL-CDS" id="BAA86436"/>
    </conflict>
    <text>Extended N-terminus.</text>
</comment>
<comment type="sequence caution" evidence="22">
    <conflict type="erroneous initiation">
        <sequence resource="EMBL-CDS" id="BAB14759"/>
    </conflict>
    <text>Truncated N-terminus.</text>
</comment>
<comment type="online information" name="Protein Spotlight">
    <link uri="https://www.proteinspotlight.org/back_issues/136"/>
    <text>The ends of our fingers - Issue 136 of March 2012</text>
</comment>
<name>SMRCD_HUMAN</name>
<evidence type="ECO:0000255" key="1"/>
<evidence type="ECO:0000255" key="2">
    <source>
        <dbReference type="PROSITE-ProRule" id="PRU00468"/>
    </source>
</evidence>
<evidence type="ECO:0000255" key="3">
    <source>
        <dbReference type="PROSITE-ProRule" id="PRU00541"/>
    </source>
</evidence>
<evidence type="ECO:0000255" key="4">
    <source>
        <dbReference type="PROSITE-ProRule" id="PRU00542"/>
    </source>
</evidence>
<evidence type="ECO:0000256" key="5">
    <source>
        <dbReference type="SAM" id="MobiDB-lite"/>
    </source>
</evidence>
<evidence type="ECO:0000269" key="6">
    <source>
    </source>
</evidence>
<evidence type="ECO:0000269" key="7">
    <source>
    </source>
</evidence>
<evidence type="ECO:0000269" key="8">
    <source>
    </source>
</evidence>
<evidence type="ECO:0000269" key="9">
    <source>
    </source>
</evidence>
<evidence type="ECO:0000269" key="10">
    <source>
    </source>
</evidence>
<evidence type="ECO:0000269" key="11">
    <source>
    </source>
</evidence>
<evidence type="ECO:0000269" key="12">
    <source>
    </source>
</evidence>
<evidence type="ECO:0000269" key="13">
    <source>
    </source>
</evidence>
<evidence type="ECO:0000269" key="14">
    <source>
    </source>
</evidence>
<evidence type="ECO:0000269" key="15">
    <source>
    </source>
</evidence>
<evidence type="ECO:0000303" key="16">
    <source>
    </source>
</evidence>
<evidence type="ECO:0000303" key="17">
    <source>
    </source>
</evidence>
<evidence type="ECO:0000303" key="18">
    <source>
    </source>
</evidence>
<evidence type="ECO:0000303" key="19">
    <source>
    </source>
</evidence>
<evidence type="ECO:0000303" key="20">
    <source>
    </source>
</evidence>
<evidence type="ECO:0000303" key="21">
    <source>
    </source>
</evidence>
<evidence type="ECO:0000305" key="22"/>
<evidence type="ECO:0000305" key="23">
    <source>
    </source>
</evidence>
<evidence type="ECO:0000312" key="24">
    <source>
        <dbReference type="HGNC" id="HGNC:18398"/>
    </source>
</evidence>
<evidence type="ECO:0007744" key="25">
    <source>
    </source>
</evidence>
<evidence type="ECO:0007744" key="26">
    <source>
    </source>
</evidence>
<evidence type="ECO:0007744" key="27">
    <source>
    </source>
</evidence>
<evidence type="ECO:0007744" key="28">
    <source>
    </source>
</evidence>
<evidence type="ECO:0007744" key="29">
    <source>
    </source>
</evidence>
<evidence type="ECO:0007744" key="30">
    <source>
    </source>
</evidence>
<evidence type="ECO:0007744" key="31">
    <source>
    </source>
</evidence>
<evidence type="ECO:0007744" key="32">
    <source>
    </source>
</evidence>
<evidence type="ECO:0007744" key="33">
    <source>
    </source>
</evidence>
<evidence type="ECO:0007744" key="34">
    <source>
    </source>
</evidence>
<evidence type="ECO:0007744" key="35">
    <source>
    </source>
</evidence>
<evidence type="ECO:0007744" key="36">
    <source>
    </source>
</evidence>
<evidence type="ECO:0007744" key="37">
    <source>
    </source>
</evidence>
<evidence type="ECO:0007829" key="38">
    <source>
        <dbReference type="PDB" id="7Z36"/>
    </source>
</evidence>
<feature type="chain" id="PRO_0000074356" description="SWI/SNF-related matrix-associated actin-dependent regulator of chromatin subfamily A containing DEAD/H box 1">
    <location>
        <begin position="1"/>
        <end position="1026"/>
    </location>
</feature>
<feature type="domain" description="CUE 1" evidence="2">
    <location>
        <begin position="157"/>
        <end position="199"/>
    </location>
</feature>
<feature type="domain" description="CUE 2" evidence="2">
    <location>
        <begin position="251"/>
        <end position="294"/>
    </location>
</feature>
<feature type="domain" description="Helicase ATP-binding" evidence="3">
    <location>
        <begin position="509"/>
        <end position="677"/>
    </location>
</feature>
<feature type="domain" description="Helicase C-terminal" evidence="4">
    <location>
        <begin position="858"/>
        <end position="1010"/>
    </location>
</feature>
<feature type="region of interest" description="Disordered" evidence="5">
    <location>
        <begin position="1"/>
        <end position="82"/>
    </location>
</feature>
<feature type="region of interest" description="Disordered" evidence="5">
    <location>
        <begin position="203"/>
        <end position="251"/>
    </location>
</feature>
<feature type="region of interest" description="Disordered" evidence="5">
    <location>
        <begin position="302"/>
        <end position="328"/>
    </location>
</feature>
<feature type="region of interest" description="Disordered" evidence="5">
    <location>
        <begin position="354"/>
        <end position="373"/>
    </location>
</feature>
<feature type="short sequence motif" description="DEGH box">
    <location>
        <begin position="628"/>
        <end position="631"/>
    </location>
</feature>
<feature type="short sequence motif" description="Nuclear localization signal" evidence="1">
    <location>
        <begin position="721"/>
        <end position="738"/>
    </location>
</feature>
<feature type="short sequence motif" description="DEGD box">
    <location>
        <begin position="1005"/>
        <end position="1008"/>
    </location>
</feature>
<feature type="compositionally biased region" description="Basic and acidic residues" evidence="5">
    <location>
        <begin position="7"/>
        <end position="19"/>
    </location>
</feature>
<feature type="compositionally biased region" description="Basic and acidic residues" evidence="5">
    <location>
        <begin position="226"/>
        <end position="238"/>
    </location>
</feature>
<feature type="compositionally biased region" description="Polar residues" evidence="5">
    <location>
        <begin position="314"/>
        <end position="323"/>
    </location>
</feature>
<feature type="binding site" evidence="3">
    <location>
        <begin position="521"/>
        <end position="529"/>
    </location>
    <ligand>
        <name>ATP</name>
        <dbReference type="ChEBI" id="CHEBI:30616"/>
    </ligand>
</feature>
<feature type="binding site" evidence="3">
    <location>
        <begin position="897"/>
        <end position="904"/>
    </location>
    <ligand>
        <name>ATP</name>
        <dbReference type="ChEBI" id="CHEBI:30616"/>
    </ligand>
</feature>
<feature type="modified residue" description="N-acetylmethionine" evidence="32 33">
    <location>
        <position position="1"/>
    </location>
</feature>
<feature type="modified residue" description="Phosphothreonine" evidence="29 31">
    <location>
        <position position="54"/>
    </location>
</feature>
<feature type="modified residue" description="Phosphoserine" evidence="31">
    <location>
        <position position="57"/>
    </location>
</feature>
<feature type="modified residue" description="Phosphothreonine" evidence="34">
    <location>
        <position position="71"/>
    </location>
</feature>
<feature type="modified residue" description="Phosphoserine" evidence="27 34">
    <location>
        <position position="79"/>
    </location>
</feature>
<feature type="modified residue" description="Phosphoserine" evidence="25 26 27 29 30 31">
    <location>
        <position position="124"/>
    </location>
</feature>
<feature type="modified residue" description="Phosphoserine" evidence="25 26 27 29 30 31">
    <location>
        <position position="127"/>
    </location>
</feature>
<feature type="modified residue" description="Phosphoserine" evidence="26 27 29">
    <location>
        <position position="132"/>
    </location>
</feature>
<feature type="modified residue" description="Phosphoserine" evidence="29 31 34">
    <location>
        <position position="146"/>
    </location>
</feature>
<feature type="modified residue" description="Phosphoserine" evidence="31 34">
    <location>
        <position position="152"/>
    </location>
</feature>
<feature type="modified residue" description="Phosphoserine" evidence="27 34">
    <location>
        <position position="211"/>
    </location>
</feature>
<feature type="modified residue" description="Phosphoserine" evidence="27">
    <location>
        <position position="214"/>
    </location>
</feature>
<feature type="modified residue" description="Phosphotyrosine" evidence="35">
    <location>
        <position position="217"/>
    </location>
</feature>
<feature type="modified residue" description="Phosphoserine" evidence="25 31 34">
    <location>
        <position position="239"/>
    </location>
</feature>
<feature type="modified residue" description="Phosphoserine" evidence="25 31">
    <location>
        <position position="242"/>
    </location>
</feature>
<feature type="modified residue" description="Phosphoserine" evidence="26 34">
    <location>
        <position position="302"/>
    </location>
</feature>
<feature type="cross-link" description="Glycyl lysine isopeptide (Lys-Gly) (interchain with G-Cter in SUMO2)" evidence="36 37">
    <location>
        <position position="77"/>
    </location>
</feature>
<feature type="cross-link" description="Glycyl lysine isopeptide (Lys-Gly) (interchain with G-Cter in SUMO2)" evidence="37">
    <location>
        <position position="84"/>
    </location>
</feature>
<feature type="cross-link" description="Glycyl lysine isopeptide (Lys-Gly) (interchain with G-Cter in SUMO2)" evidence="37">
    <location>
        <position position="335"/>
    </location>
</feature>
<feature type="cross-link" description="Glycyl lysine isopeptide (Lys-Gly) (interchain with G-Cter in SUMO2)" evidence="37">
    <location>
        <position position="471"/>
    </location>
</feature>
<feature type="cross-link" description="Glycyl lysine isopeptide (Lys-Gly) (interchain with G-Cter in SUMO2)" evidence="37">
    <location>
        <position position="724"/>
    </location>
</feature>
<feature type="cross-link" description="Glycyl lysine isopeptide (Lys-Gly) (interchain with G-Cter in SUMO2)" evidence="37">
    <location>
        <position position="996"/>
    </location>
</feature>
<feature type="splice variant" id="VSP_043110" description="In isoform 3." evidence="18">
    <location>
        <begin position="1"/>
        <end position="430"/>
    </location>
</feature>
<feature type="splice variant" id="VSP_007104" description="In isoform 2." evidence="16 18 19">
    <original>L</original>
    <variation>LVT</variation>
    <location>
        <position position="765"/>
    </location>
</feature>
<feature type="sequence variant" id="VAR_028037" description="In dbSNP:rs11723410.">
    <original>S</original>
    <variation>F</variation>
    <location>
        <position position="66"/>
    </location>
</feature>
<feature type="sequence variant" id="VAR_028038" description="In dbSNP:rs2664891.">
    <original>L</original>
    <variation>F</variation>
    <location>
        <position position="135"/>
    </location>
</feature>
<feature type="sequence variant" id="VAR_028039" description="In dbSNP:rs2632398.">
    <original>R</original>
    <variation>C</variation>
    <location>
        <position position="140"/>
    </location>
</feature>
<feature type="sequence variant" id="VAR_028040" description="In dbSNP:rs3103117.">
    <original>S</original>
    <variation>Y</variation>
    <location>
        <position position="245"/>
    </location>
</feature>
<feature type="sequence variant" id="VAR_028041" description="In dbSNP:rs11722476." evidence="7 25">
    <original>S</original>
    <variation>N</variation>
    <location>
        <position position="247"/>
    </location>
</feature>
<feature type="sequence variant" id="VAR_028042" description="In dbSNP:rs7439869." evidence="6 7 26 28 34">
    <original>V</original>
    <variation>A</variation>
    <location>
        <position position="301"/>
    </location>
</feature>
<feature type="sequence variant" id="VAR_028043" description="In dbSNP:rs17854344." evidence="7">
    <original>P</original>
    <variation>Q</variation>
    <location>
        <position position="351"/>
    </location>
</feature>
<feature type="sequence variant" id="VAR_028044" description="In dbSNP:rs17857297." evidence="7">
    <original>V</original>
    <variation>A</variation>
    <location>
        <position position="972"/>
    </location>
</feature>
<feature type="mutagenesis site" description="No effect on subcellular localization and on histone deacetylation." evidence="9">
    <original>K</original>
    <variation>R</variation>
    <location>
        <position position="528"/>
    </location>
</feature>
<feature type="sequence conflict" description="In Ref. 5; AAH17953." evidence="22" ref="5">
    <original>E</original>
    <variation>D</variation>
    <location>
        <position position="215"/>
    </location>
</feature>
<feature type="sequence conflict" description="In Ref. 3; BAB14759." evidence="22" ref="3">
    <original>N</original>
    <variation>D</variation>
    <location>
        <position position="937"/>
    </location>
</feature>
<feature type="helix" evidence="38">
    <location>
        <begin position="155"/>
        <end position="168"/>
    </location>
</feature>
<feature type="helix" evidence="38">
    <location>
        <begin position="174"/>
        <end position="183"/>
    </location>
</feature>
<feature type="helix" evidence="38">
    <location>
        <begin position="187"/>
        <end position="196"/>
    </location>
</feature>
<protein>
    <recommendedName>
        <fullName evidence="22">SWI/SNF-related matrix-associated actin-dependent regulator of chromatin subfamily A containing DEAD/H box 1</fullName>
        <shortName evidence="17 21">SMARCAD1</shortName>
        <ecNumber evidence="11">3.6.4.12</ecNumber>
    </recommendedName>
    <alternativeName>
        <fullName>ATP-dependent helicase 1</fullName>
        <shortName>hHEL1</shortName>
    </alternativeName>
</protein>
<accession>Q9H4L7</accession>
<accession>B7Z799</accession>
<accession>Q05D56</accession>
<accession>Q96SX1</accession>
<accession>Q9H017</accession>
<accession>Q9H860</accession>
<accession>Q9NPU9</accession>
<accession>Q9ULU7</accession>
<sequence>MNLFNLDRFRFEKRNKIEEAPEATPQPSQPGPSSPISLSAEEENAEGEVSRANTPDSDITEKTEDSSVPETPDNERKASISYFKNQRGIQYIDLSSDSEDVVSPNCSNTVQEKTFNKDTVIIVSEPSEDEESQGLPTMARRNDDISELEDLSELEDLKDAKLQTLKELFPQRSDNDLLKLIESTSTMDGAIAAALLMFGDAGGGPRKRKLSSSSEPYEEDEFNDDQSIKKTRLDHGEESNESAESSSNWEKQESIVLKLQKEFPNFDKQELREVLKEHEWMYTEALESLKVFAEDQDMQYVSQSEVPNGKEVSSRSQNYPKNATKTKLKQKFSMKAQNGFNKKRKKNVFNPKRVVEDSEYDSGSDVGSSLDEDYSSGEEVMEDGYKGKILHFLQDASIGELTLIPQCSQKKAQKITELRPFNSWEALFTKMSKTNGLSEDLIWHCKTLIQERDVVIRLMNKCEDISNKLTKQVTMLTGNGGGWNIEQPSILNQSLSLKPYQKVGLNWLALVHKHGLNGILADEMGLGKTIQAIAFLAYLYQEGNNGPHLIVVPASTIDNWLREVNLWCPTLKVLCYYGSQEERKQIRFNIHSRYEDYNVIVTTYNCAISSSDDRSLFRRLKLNYAIFDEGHMLKNMGSIRYQHLMTINANNRLLLTGTPVQNNLLELMSLLNFVMPHMFSSSTSEIRRMFSSKTKSADEQSIYEKERIAHAKQIIKPFILRRVKEEVLKQLPPKKDRIELCAMSEKQEQLYLGLFNRLKKSINNLEKNTEMCNVMMQLRKMANHPLLHRQYYTAEKLKEMSQLMLKEPTHCEANPDLIFEDMEVMTDFELHVLCKQYRHINNFQLDMDLILDSGKFRVLGCILSELKQKGDRVVLFSQFTMMLDILEVLLKHHQHRYLRLDGKTQISERIHLIDEFNTDMDIFVFLLSTKAGGLGINLTSANVVILHDIDCNPYNDKQAEDRCHRVGQTKEVLVIKLISQGTIEESMLKINQQKLKLEQDMTTVDEGDEGSMPADIATLLKTSMGL</sequence>
<reference key="1">
    <citation type="journal article" date="2000" name="Genomics">
        <title>SMARCAD1, a novel human helicase family-defining member associated with genetic instability: cloning, expression, and mapping to 4q22-q23, a band rich in breakpoints and deletion mutants involved in several human diseases.</title>
        <authorList>
            <person name="Adra C.N."/>
            <person name="Donato J.-L."/>
            <person name="Badovinac R."/>
            <person name="Syed F."/>
            <person name="Kheraj R."/>
            <person name="Cai H."/>
            <person name="Moran C."/>
            <person name="Kolker M.T."/>
            <person name="Turner H."/>
            <person name="Weremowicz S."/>
            <person name="Shirakawa T."/>
            <person name="Morton C.C."/>
            <person name="Schnipper L.E."/>
            <person name="Drews R."/>
        </authorList>
    </citation>
    <scope>NUCLEOTIDE SEQUENCE [MRNA] (ISOFORM 1)</scope>
    <scope>TISSUE SPECIFICITY</scope>
    <scope>VARIANT ALA-301</scope>
    <source>
        <tissue>Fetal brain</tissue>
    </source>
</reference>
<reference key="2">
    <citation type="journal article" date="1999" name="DNA Res.">
        <title>Characterization of cDNA clones selected by the GeneMark analysis from size-fractionated cDNA libraries from human brain.</title>
        <authorList>
            <person name="Hirosawa M."/>
            <person name="Nagase T."/>
            <person name="Ishikawa K."/>
            <person name="Kikuno R."/>
            <person name="Nomura N."/>
            <person name="Ohara O."/>
        </authorList>
    </citation>
    <scope>NUCLEOTIDE SEQUENCE [LARGE SCALE MRNA] (ISOFORM 2)</scope>
    <source>
        <tissue>Brain</tissue>
    </source>
</reference>
<reference key="3">
    <citation type="journal article" date="2004" name="Nat. Genet.">
        <title>Complete sequencing and characterization of 21,243 full-length human cDNAs.</title>
        <authorList>
            <person name="Ota T."/>
            <person name="Suzuki Y."/>
            <person name="Nishikawa T."/>
            <person name="Otsuki T."/>
            <person name="Sugiyama T."/>
            <person name="Irie R."/>
            <person name="Wakamatsu A."/>
            <person name="Hayashi K."/>
            <person name="Sato H."/>
            <person name="Nagai K."/>
            <person name="Kimura K."/>
            <person name="Makita H."/>
            <person name="Sekine M."/>
            <person name="Obayashi M."/>
            <person name="Nishi T."/>
            <person name="Shibahara T."/>
            <person name="Tanaka T."/>
            <person name="Ishii S."/>
            <person name="Yamamoto J."/>
            <person name="Saito K."/>
            <person name="Kawai Y."/>
            <person name="Isono Y."/>
            <person name="Nakamura Y."/>
            <person name="Nagahari K."/>
            <person name="Murakami K."/>
            <person name="Yasuda T."/>
            <person name="Iwayanagi T."/>
            <person name="Wagatsuma M."/>
            <person name="Shiratori A."/>
            <person name="Sudo H."/>
            <person name="Hosoiri T."/>
            <person name="Kaku Y."/>
            <person name="Kodaira H."/>
            <person name="Kondo H."/>
            <person name="Sugawara M."/>
            <person name="Takahashi M."/>
            <person name="Kanda K."/>
            <person name="Yokoi T."/>
            <person name="Furuya T."/>
            <person name="Kikkawa E."/>
            <person name="Omura Y."/>
            <person name="Abe K."/>
            <person name="Kamihara K."/>
            <person name="Katsuta N."/>
            <person name="Sato K."/>
            <person name="Tanikawa M."/>
            <person name="Yamazaki M."/>
            <person name="Ninomiya K."/>
            <person name="Ishibashi T."/>
            <person name="Yamashita H."/>
            <person name="Murakawa K."/>
            <person name="Fujimori K."/>
            <person name="Tanai H."/>
            <person name="Kimata M."/>
            <person name="Watanabe M."/>
            <person name="Hiraoka S."/>
            <person name="Chiba Y."/>
            <person name="Ishida S."/>
            <person name="Ono Y."/>
            <person name="Takiguchi S."/>
            <person name="Watanabe S."/>
            <person name="Yosida M."/>
            <person name="Hotuta T."/>
            <person name="Kusano J."/>
            <person name="Kanehori K."/>
            <person name="Takahashi-Fujii A."/>
            <person name="Hara H."/>
            <person name="Tanase T.-O."/>
            <person name="Nomura Y."/>
            <person name="Togiya S."/>
            <person name="Komai F."/>
            <person name="Hara R."/>
            <person name="Takeuchi K."/>
            <person name="Arita M."/>
            <person name="Imose N."/>
            <person name="Musashino K."/>
            <person name="Yuuki H."/>
            <person name="Oshima A."/>
            <person name="Sasaki N."/>
            <person name="Aotsuka S."/>
            <person name="Yoshikawa Y."/>
            <person name="Matsunawa H."/>
            <person name="Ichihara T."/>
            <person name="Shiohata N."/>
            <person name="Sano S."/>
            <person name="Moriya S."/>
            <person name="Momiyama H."/>
            <person name="Satoh N."/>
            <person name="Takami S."/>
            <person name="Terashima Y."/>
            <person name="Suzuki O."/>
            <person name="Nakagawa S."/>
            <person name="Senoh A."/>
            <person name="Mizoguchi H."/>
            <person name="Goto Y."/>
            <person name="Shimizu F."/>
            <person name="Wakebe H."/>
            <person name="Hishigaki H."/>
            <person name="Watanabe T."/>
            <person name="Sugiyama A."/>
            <person name="Takemoto M."/>
            <person name="Kawakami B."/>
            <person name="Yamazaki M."/>
            <person name="Watanabe K."/>
            <person name="Kumagai A."/>
            <person name="Itakura S."/>
            <person name="Fukuzumi Y."/>
            <person name="Fujimori Y."/>
            <person name="Komiyama M."/>
            <person name="Tashiro H."/>
            <person name="Tanigami A."/>
            <person name="Fujiwara T."/>
            <person name="Ono T."/>
            <person name="Yamada K."/>
            <person name="Fujii Y."/>
            <person name="Ozaki K."/>
            <person name="Hirao M."/>
            <person name="Ohmori Y."/>
            <person name="Kawabata A."/>
            <person name="Hikiji T."/>
            <person name="Kobatake N."/>
            <person name="Inagaki H."/>
            <person name="Ikema Y."/>
            <person name="Okamoto S."/>
            <person name="Okitani R."/>
            <person name="Kawakami T."/>
            <person name="Noguchi S."/>
            <person name="Itoh T."/>
            <person name="Shigeta K."/>
            <person name="Senba T."/>
            <person name="Matsumura K."/>
            <person name="Nakajima Y."/>
            <person name="Mizuno T."/>
            <person name="Morinaga M."/>
            <person name="Sasaki M."/>
            <person name="Togashi T."/>
            <person name="Oyama M."/>
            <person name="Hata H."/>
            <person name="Watanabe M."/>
            <person name="Komatsu T."/>
            <person name="Mizushima-Sugano J."/>
            <person name="Satoh T."/>
            <person name="Shirai Y."/>
            <person name="Takahashi Y."/>
            <person name="Nakagawa K."/>
            <person name="Okumura K."/>
            <person name="Nagase T."/>
            <person name="Nomura N."/>
            <person name="Kikuchi H."/>
            <person name="Masuho Y."/>
            <person name="Yamashita R."/>
            <person name="Nakai K."/>
            <person name="Yada T."/>
            <person name="Nakamura Y."/>
            <person name="Ohara O."/>
            <person name="Isogai T."/>
            <person name="Sugano S."/>
        </authorList>
    </citation>
    <scope>NUCLEOTIDE SEQUENCE [LARGE SCALE MRNA] (ISOFORM 3)</scope>
    <scope>NUCLEOTIDE SEQUENCE [LARGE SCALE MRNA] OF 1-702 (ISOFORMS 1/2)</scope>
    <scope>NUCLEOTIDE SEQUENCE [LARGE SCALE MRNA] OF 649-1026 (ISOFORM 2)</scope>
</reference>
<reference key="4">
    <citation type="journal article" date="2005" name="Nature">
        <title>Generation and annotation of the DNA sequences of human chromosomes 2 and 4.</title>
        <authorList>
            <person name="Hillier L.W."/>
            <person name="Graves T.A."/>
            <person name="Fulton R.S."/>
            <person name="Fulton L.A."/>
            <person name="Pepin K.H."/>
            <person name="Minx P."/>
            <person name="Wagner-McPherson C."/>
            <person name="Layman D."/>
            <person name="Wylie K."/>
            <person name="Sekhon M."/>
            <person name="Becker M.C."/>
            <person name="Fewell G.A."/>
            <person name="Delehaunty K.D."/>
            <person name="Miner T.L."/>
            <person name="Nash W.E."/>
            <person name="Kremitzki C."/>
            <person name="Oddy L."/>
            <person name="Du H."/>
            <person name="Sun H."/>
            <person name="Bradshaw-Cordum H."/>
            <person name="Ali J."/>
            <person name="Carter J."/>
            <person name="Cordes M."/>
            <person name="Harris A."/>
            <person name="Isak A."/>
            <person name="van Brunt A."/>
            <person name="Nguyen C."/>
            <person name="Du F."/>
            <person name="Courtney L."/>
            <person name="Kalicki J."/>
            <person name="Ozersky P."/>
            <person name="Abbott S."/>
            <person name="Armstrong J."/>
            <person name="Belter E.A."/>
            <person name="Caruso L."/>
            <person name="Cedroni M."/>
            <person name="Cotton M."/>
            <person name="Davidson T."/>
            <person name="Desai A."/>
            <person name="Elliott G."/>
            <person name="Erb T."/>
            <person name="Fronick C."/>
            <person name="Gaige T."/>
            <person name="Haakenson W."/>
            <person name="Haglund K."/>
            <person name="Holmes A."/>
            <person name="Harkins R."/>
            <person name="Kim K."/>
            <person name="Kruchowski S.S."/>
            <person name="Strong C.M."/>
            <person name="Grewal N."/>
            <person name="Goyea E."/>
            <person name="Hou S."/>
            <person name="Levy A."/>
            <person name="Martinka S."/>
            <person name="Mead K."/>
            <person name="McLellan M.D."/>
            <person name="Meyer R."/>
            <person name="Randall-Maher J."/>
            <person name="Tomlinson C."/>
            <person name="Dauphin-Kohlberg S."/>
            <person name="Kozlowicz-Reilly A."/>
            <person name="Shah N."/>
            <person name="Swearengen-Shahid S."/>
            <person name="Snider J."/>
            <person name="Strong J.T."/>
            <person name="Thompson J."/>
            <person name="Yoakum M."/>
            <person name="Leonard S."/>
            <person name="Pearman C."/>
            <person name="Trani L."/>
            <person name="Radionenko M."/>
            <person name="Waligorski J.E."/>
            <person name="Wang C."/>
            <person name="Rock S.M."/>
            <person name="Tin-Wollam A.-M."/>
            <person name="Maupin R."/>
            <person name="Latreille P."/>
            <person name="Wendl M.C."/>
            <person name="Yang S.-P."/>
            <person name="Pohl C."/>
            <person name="Wallis J.W."/>
            <person name="Spieth J."/>
            <person name="Bieri T.A."/>
            <person name="Berkowicz N."/>
            <person name="Nelson J.O."/>
            <person name="Osborne J."/>
            <person name="Ding L."/>
            <person name="Meyer R."/>
            <person name="Sabo A."/>
            <person name="Shotland Y."/>
            <person name="Sinha P."/>
            <person name="Wohldmann P.E."/>
            <person name="Cook L.L."/>
            <person name="Hickenbotham M.T."/>
            <person name="Eldred J."/>
            <person name="Williams D."/>
            <person name="Jones T.A."/>
            <person name="She X."/>
            <person name="Ciccarelli F.D."/>
            <person name="Izaurralde E."/>
            <person name="Taylor J."/>
            <person name="Schmutz J."/>
            <person name="Myers R.M."/>
            <person name="Cox D.R."/>
            <person name="Huang X."/>
            <person name="McPherson J.D."/>
            <person name="Mardis E.R."/>
            <person name="Clifton S.W."/>
            <person name="Warren W.C."/>
            <person name="Chinwalla A.T."/>
            <person name="Eddy S.R."/>
            <person name="Marra M.A."/>
            <person name="Ovcharenko I."/>
            <person name="Furey T.S."/>
            <person name="Miller W."/>
            <person name="Eichler E.E."/>
            <person name="Bork P."/>
            <person name="Suyama M."/>
            <person name="Torrents D."/>
            <person name="Waterston R.H."/>
            <person name="Wilson R.K."/>
        </authorList>
    </citation>
    <scope>NUCLEOTIDE SEQUENCE [LARGE SCALE GENOMIC DNA]</scope>
</reference>
<reference key="5">
    <citation type="journal article" date="2004" name="Genome Res.">
        <title>The status, quality, and expansion of the NIH full-length cDNA project: the Mammalian Gene Collection (MGC).</title>
        <authorList>
            <consortium name="The MGC Project Team"/>
        </authorList>
    </citation>
    <scope>NUCLEOTIDE SEQUENCE [LARGE SCALE MRNA] (ISOFORM 2)</scope>
    <scope>VARIANTS ASN-247; ALA-301; GLN-351 AND ALA-972</scope>
    <source>
        <tissue>Kidney</tissue>
        <tissue>Testis</tissue>
    </source>
</reference>
<reference key="6">
    <citation type="journal article" date="2007" name="BMC Genomics">
        <title>The full-ORF clone resource of the German cDNA consortium.</title>
        <authorList>
            <person name="Bechtel S."/>
            <person name="Rosenfelder H."/>
            <person name="Duda A."/>
            <person name="Schmidt C.P."/>
            <person name="Ernst U."/>
            <person name="Wellenreuther R."/>
            <person name="Mehrle A."/>
            <person name="Schuster C."/>
            <person name="Bahr A."/>
            <person name="Bloecker H."/>
            <person name="Heubner D."/>
            <person name="Hoerlein A."/>
            <person name="Michel G."/>
            <person name="Wedler H."/>
            <person name="Koehrer K."/>
            <person name="Ottenwaelder B."/>
            <person name="Poustka A."/>
            <person name="Wiemann S."/>
            <person name="Schupp I."/>
        </authorList>
    </citation>
    <scope>NUCLEOTIDE SEQUENCE [LARGE SCALE MRNA] OF 433-1026 (ISOFORM 1)</scope>
    <source>
        <tissue>Melanoma</tissue>
        <tissue>Testis</tissue>
    </source>
</reference>
<reference key="7">
    <citation type="journal article" date="2006" name="Cell">
        <title>Global, in vivo, and site-specific phosphorylation dynamics in signaling networks.</title>
        <authorList>
            <person name="Olsen J.V."/>
            <person name="Blagoev B."/>
            <person name="Gnad F."/>
            <person name="Macek B."/>
            <person name="Kumar C."/>
            <person name="Mortensen P."/>
            <person name="Mann M."/>
        </authorList>
    </citation>
    <scope>PHOSPHORYLATION [LARGE SCALE ANALYSIS] AT SER-124; SER-127; SER-239 AND SER-242</scope>
    <scope>VARIANT [LARGE SCALE ANALYSIS] ASN-247</scope>
    <scope>IDENTIFICATION BY MASS SPECTROMETRY [LARGE SCALE ANALYSIS]</scope>
    <source>
        <tissue>Cervix carcinoma</tissue>
    </source>
</reference>
<reference key="8">
    <citation type="journal article" date="2007" name="Science">
        <title>ATM and ATR substrate analysis reveals extensive protein networks responsive to DNA damage.</title>
        <authorList>
            <person name="Matsuoka S."/>
            <person name="Ballif B.A."/>
            <person name="Smogorzewska A."/>
            <person name="McDonald E.R. III"/>
            <person name="Hurov K.E."/>
            <person name="Luo J."/>
            <person name="Bakalarski C.E."/>
            <person name="Zhao Z."/>
            <person name="Solimini N."/>
            <person name="Lerenthal Y."/>
            <person name="Shiloh Y."/>
            <person name="Gygi S.P."/>
            <person name="Elledge S.J."/>
        </authorList>
    </citation>
    <scope>PHOSPHORYLATION [LARGE SCALE ANALYSIS] AT SER-124; SER-127; SER-132 AND SER-302</scope>
    <scope>VARIANT [LARGE SCALE ANALYSIS] ALA-301</scope>
    <scope>IDENTIFICATION BY MASS SPECTROMETRY [LARGE SCALE ANALYSIS]</scope>
    <source>
        <tissue>Embryonic kidney</tissue>
    </source>
</reference>
<reference key="9">
    <citation type="journal article" date="2008" name="J. Mol. Biol.">
        <title>The novel protein complex with SMARCAD1/KIAA1122 binds to the vicinity of TSS.</title>
        <authorList>
            <person name="Okazaki N."/>
            <person name="Ikeda S."/>
            <person name="Ohara R."/>
            <person name="Shimada K."/>
            <person name="Yanagawa T."/>
            <person name="Nagase T."/>
            <person name="Ohara O."/>
            <person name="Koga H."/>
        </authorList>
    </citation>
    <scope>DNA-BINDING</scope>
    <scope>INTERACTION WITH MSH2 AND TRIM28</scope>
    <scope>SUBCELLULAR LOCATION</scope>
</reference>
<reference key="10">
    <citation type="journal article" date="2008" name="Proc. Natl. Acad. Sci. U.S.A.">
        <title>A quantitative atlas of mitotic phosphorylation.</title>
        <authorList>
            <person name="Dephoure N."/>
            <person name="Zhou C."/>
            <person name="Villen J."/>
            <person name="Beausoleil S.A."/>
            <person name="Bakalarski C.E."/>
            <person name="Elledge S.J."/>
            <person name="Gygi S.P."/>
        </authorList>
    </citation>
    <scope>PHOSPHORYLATION [LARGE SCALE ANALYSIS] AT SER-79; SER-124; SER-127; SER-132; SER-211 AND SER-214</scope>
    <scope>IDENTIFICATION BY MASS SPECTROMETRY [LARGE SCALE ANALYSIS]</scope>
    <source>
        <tissue>Cervix carcinoma</tissue>
    </source>
</reference>
<reference key="11">
    <citation type="journal article" date="2009" name="Sci. Signal.">
        <title>Quantitative phosphoproteomic analysis of T cell receptor signaling reveals system-wide modulation of protein-protein interactions.</title>
        <authorList>
            <person name="Mayya V."/>
            <person name="Lundgren D.H."/>
            <person name="Hwang S.-I."/>
            <person name="Rezaul K."/>
            <person name="Wu L."/>
            <person name="Eng J.K."/>
            <person name="Rodionov V."/>
            <person name="Han D.K."/>
        </authorList>
    </citation>
    <scope>PHOSPHORYLATION [LARGE SCALE ANALYSIS] AT THR-54; SER-124; SER-127; SER-132 AND SER-146</scope>
    <scope>IDENTIFICATION BY MASS SPECTROMETRY [LARGE SCALE ANALYSIS]</scope>
    <source>
        <tissue>Leukemic T-cell</tissue>
    </source>
</reference>
<reference key="12">
    <citation type="journal article" date="2010" name="Sci. Signal.">
        <title>Quantitative phosphoproteomics reveals widespread full phosphorylation site occupancy during mitosis.</title>
        <authorList>
            <person name="Olsen J.V."/>
            <person name="Vermeulen M."/>
            <person name="Santamaria A."/>
            <person name="Kumar C."/>
            <person name="Miller M.L."/>
            <person name="Jensen L.J."/>
            <person name="Gnad F."/>
            <person name="Cox J."/>
            <person name="Jensen T.S."/>
            <person name="Nigg E.A."/>
            <person name="Brunak S."/>
            <person name="Mann M."/>
        </authorList>
    </citation>
    <scope>PHOSPHORYLATION [LARGE SCALE ANALYSIS] AT SER-124 AND SER-127</scope>
    <scope>IDENTIFICATION BY MASS SPECTROMETRY [LARGE SCALE ANALYSIS]</scope>
    <source>
        <tissue>Cervix carcinoma</tissue>
    </source>
</reference>
<reference key="13">
    <citation type="journal article" date="2011" name="Am. J. Hum. Genet.">
        <title>A mutation in a skin-specific isoform of SMARCAD1 causes autosomal-dominant adermatoglyphia.</title>
        <authorList>
            <person name="Nousbeck J."/>
            <person name="Burger B."/>
            <person name="Fuchs-Telem D."/>
            <person name="Pavlovsky M."/>
            <person name="Fenig S."/>
            <person name="Sarig O."/>
            <person name="Itin P."/>
            <person name="Sprecher E."/>
        </authorList>
    </citation>
    <scope>INVOLVEMENT IN ADERM</scope>
    <scope>TISSUE SPECIFICITY</scope>
    <scope>ALTERNATIVE SPLICING (ISOFORM 3)</scope>
</reference>
<reference key="14">
    <citation type="journal article" date="2011" name="BMC Syst. Biol.">
        <title>Initial characterization of the human central proteome.</title>
        <authorList>
            <person name="Burkard T.R."/>
            <person name="Planyavsky M."/>
            <person name="Kaupe I."/>
            <person name="Breitwieser F.P."/>
            <person name="Buerckstuemmer T."/>
            <person name="Bennett K.L."/>
            <person name="Superti-Furga G."/>
            <person name="Colinge J."/>
        </authorList>
    </citation>
    <scope>IDENTIFICATION BY MASS SPECTROMETRY [LARGE SCALE ANALYSIS]</scope>
</reference>
<reference key="15">
    <citation type="journal article" date="2011" name="Mol. Cell">
        <title>Maintenance of silent chromatin through replication requires SWI/SNF-like chromatin remodeler SMARCAD1.</title>
        <authorList>
            <person name="Rowbotham S.P."/>
            <person name="Barki L."/>
            <person name="Neves-Costa A."/>
            <person name="Santos F."/>
            <person name="Dean W."/>
            <person name="Hawkes N."/>
            <person name="Choudhary P."/>
            <person name="Will W.R."/>
            <person name="Webster J."/>
            <person name="Oxley D."/>
            <person name="Green C.M."/>
            <person name="Varga-Weisz P."/>
            <person name="Mermoud J.E."/>
        </authorList>
    </citation>
    <scope>FUNCTION</scope>
    <scope>SUBCELLULAR LOCATION</scope>
    <scope>INTERACTION WITH PCNA; TRIM28; HDAC1; HDAC2; EHMT2; PARP1 AND CBX3</scope>
    <scope>MUTAGENESIS OF LYS-528</scope>
</reference>
<reference key="16">
    <citation type="journal article" date="2011" name="Sci. Signal.">
        <title>System-wide temporal characterization of the proteome and phosphoproteome of human embryonic stem cell differentiation.</title>
        <authorList>
            <person name="Rigbolt K.T."/>
            <person name="Prokhorova T.A."/>
            <person name="Akimov V."/>
            <person name="Henningsen J."/>
            <person name="Johansen P.T."/>
            <person name="Kratchmarova I."/>
            <person name="Kassem M."/>
            <person name="Mann M."/>
            <person name="Olsen J.V."/>
            <person name="Blagoev B."/>
        </authorList>
    </citation>
    <scope>PHOSPHORYLATION [LARGE SCALE ANALYSIS] AT THR-54; SER-57; SER-124; SER-127; SER-146; SER-152; SER-239 AND SER-242</scope>
    <scope>IDENTIFICATION BY MASS SPECTROMETRY [LARGE SCALE ANALYSIS]</scope>
</reference>
<reference key="17">
    <citation type="journal article" date="2012" name="Mol. Cell. Proteomics">
        <title>Comparative large-scale characterisation of plant vs. mammal proteins reveals similar and idiosyncratic N-alpha acetylation features.</title>
        <authorList>
            <person name="Bienvenut W.V."/>
            <person name="Sumpton D."/>
            <person name="Martinez A."/>
            <person name="Lilla S."/>
            <person name="Espagne C."/>
            <person name="Meinnel T."/>
            <person name="Giglione C."/>
        </authorList>
    </citation>
    <scope>ACETYLATION [LARGE SCALE ANALYSIS] AT MET-1</scope>
    <scope>IDENTIFICATION BY MASS SPECTROMETRY [LARGE SCALE ANALYSIS]</scope>
</reference>
<reference key="18">
    <citation type="journal article" date="2012" name="Nature">
        <title>The yeast Fun30 and human SMARCAD1 chromatin remodellers promote DNA end resection.</title>
        <authorList>
            <person name="Costelloe T."/>
            <person name="Louge R."/>
            <person name="Tomimatsu N."/>
            <person name="Mukherjee B."/>
            <person name="Martini E."/>
            <person name="Khadaroo B."/>
            <person name="Dubois K."/>
            <person name="Wiegant W.W."/>
            <person name="Thierry A."/>
            <person name="Burma S."/>
            <person name="van Attikum H."/>
            <person name="Llorente B."/>
        </authorList>
    </citation>
    <scope>FUNCTION</scope>
    <scope>SUBCELLULAR LOCATION</scope>
</reference>
<reference key="19">
    <citation type="journal article" date="2012" name="Proc. Natl. Acad. Sci. U.S.A.">
        <title>N-terminal acetylome analyses and functional insights of the N-terminal acetyltransferase NatB.</title>
        <authorList>
            <person name="Van Damme P."/>
            <person name="Lasa M."/>
            <person name="Polevoda B."/>
            <person name="Gazquez C."/>
            <person name="Elosegui-Artola A."/>
            <person name="Kim D.S."/>
            <person name="De Juan-Pardo E."/>
            <person name="Demeyer K."/>
            <person name="Hole K."/>
            <person name="Larrea E."/>
            <person name="Timmerman E."/>
            <person name="Prieto J."/>
            <person name="Arnesen T."/>
            <person name="Sherman F."/>
            <person name="Gevaert K."/>
            <person name="Aldabe R."/>
        </authorList>
    </citation>
    <scope>ACETYLATION [LARGE SCALE ANALYSIS] AT MET-1</scope>
    <scope>IDENTIFICATION BY MASS SPECTROMETRY [LARGE SCALE ANALYSIS]</scope>
</reference>
<reference key="20">
    <citation type="journal article" date="2013" name="J. Proteome Res.">
        <title>Toward a comprehensive characterization of a human cancer cell phosphoproteome.</title>
        <authorList>
            <person name="Zhou H."/>
            <person name="Di Palma S."/>
            <person name="Preisinger C."/>
            <person name="Peng M."/>
            <person name="Polat A.N."/>
            <person name="Heck A.J."/>
            <person name="Mohammed S."/>
        </authorList>
    </citation>
    <scope>PHOSPHORYLATION [LARGE SCALE ANALYSIS] AT THR-71; SER-79; SER-146; SER-152; SER-211; SER-239 AND SER-302</scope>
    <scope>VARIANT [LARGE SCALE ANALYSIS] ALA-301</scope>
    <scope>IDENTIFICATION BY MASS SPECTROMETRY [LARGE SCALE ANALYSIS]</scope>
    <source>
        <tissue>Cervix carcinoma</tissue>
        <tissue>Erythroleukemia</tissue>
    </source>
</reference>
<reference key="21">
    <citation type="journal article" date="2014" name="Am. J. Med. Genet. A">
        <title>Analysis of two candidate genes for Basan syndrome.</title>
        <authorList>
            <person name="Marks K.C."/>
            <person name="Banks W.R. III"/>
            <person name="Cunningham D."/>
            <person name="Witman P.M."/>
            <person name="Herman G.E."/>
        </authorList>
    </citation>
    <scope>INVOLVEMENT IN BSNS</scope>
</reference>
<reference key="22">
    <citation type="journal article" date="2014" name="Br. J. Dermatol.">
        <title>Mutations in SMARCAD1 cause autosomal dominant adermatoglyphia and perturb the expression of epidermal differentiation-associated genes.</title>
        <authorList>
            <person name="Nousbeck J."/>
            <person name="Sarig O."/>
            <person name="Magal L."/>
            <person name="Warshauer E."/>
            <person name="Burger B."/>
            <person name="Itin P."/>
            <person name="Sprecher E."/>
        </authorList>
    </citation>
    <scope>INVOLVEMENT IN ADERM</scope>
</reference>
<reference key="23">
    <citation type="journal article" date="2014" name="J. Proteomics">
        <title>An enzyme assisted RP-RPLC approach for in-depth analysis of human liver phosphoproteome.</title>
        <authorList>
            <person name="Bian Y."/>
            <person name="Song C."/>
            <person name="Cheng K."/>
            <person name="Dong M."/>
            <person name="Wang F."/>
            <person name="Huang J."/>
            <person name="Sun D."/>
            <person name="Wang L."/>
            <person name="Ye M."/>
            <person name="Zou H."/>
        </authorList>
    </citation>
    <scope>PHOSPHORYLATION [LARGE SCALE ANALYSIS] AT TYR-217</scope>
    <scope>IDENTIFICATION BY MASS SPECTROMETRY [LARGE SCALE ANALYSIS]</scope>
    <source>
        <tissue>Liver</tissue>
    </source>
</reference>
<reference key="24">
    <citation type="journal article" date="2014" name="Nat. Struct. Mol. Biol.">
        <title>Uncovering global SUMOylation signaling networks in a site-specific manner.</title>
        <authorList>
            <person name="Hendriks I.A."/>
            <person name="D'Souza R.C."/>
            <person name="Yang B."/>
            <person name="Verlaan-de Vries M."/>
            <person name="Mann M."/>
            <person name="Vertegaal A.C."/>
        </authorList>
    </citation>
    <scope>SUMOYLATION [LARGE SCALE ANALYSIS] AT LYS-77</scope>
    <scope>IDENTIFICATION BY MASS SPECTROMETRY [LARGE SCALE ANALYSIS]</scope>
</reference>
<reference key="25">
    <citation type="journal article" date="2016" name="Eur. J. Hum. Genet.">
        <title>Genome-wide linkage analysis and whole-genome sequencing identify a recurrent SMARCAD1 variant in a unique Chinese family with Basan syndrome.</title>
        <authorList>
            <person name="Li M."/>
            <person name="Wang J."/>
            <person name="Li Z."/>
            <person name="Zhang J."/>
            <person name="Ni C."/>
            <person name="Cheng R."/>
            <person name="Yao Z."/>
        </authorList>
    </citation>
    <scope>INVOLVEMENT IN BSNS</scope>
</reference>
<reference key="26">
    <citation type="journal article" date="2017" name="Nat. Struct. Mol. Biol.">
        <title>Site-specific mapping of the human SUMO proteome reveals co-modification with phosphorylation.</title>
        <authorList>
            <person name="Hendriks I.A."/>
            <person name="Lyon D."/>
            <person name="Young C."/>
            <person name="Jensen L.J."/>
            <person name="Vertegaal A.C."/>
            <person name="Nielsen M.L."/>
        </authorList>
    </citation>
    <scope>SUMOYLATION [LARGE SCALE ANALYSIS] AT LYS-77; LYS-84; LYS-335; LYS-471; LYS-724 AND LYS-996</scope>
    <scope>IDENTIFICATION BY MASS SPECTROMETRY [LARGE SCALE ANALYSIS]</scope>
</reference>
<reference key="27">
    <citation type="journal article" date="2018" name="J. Invest. Dermatol.">
        <title>SMARCAD1 Haploinsufficiency Underlies Huriez Syndrome and Associated Skin Cancer Susceptibility.</title>
        <authorList>
            <person name="Guenther C."/>
            <person name="Lee-Kirsch M.A."/>
            <person name="Eckhard J."/>
            <person name="Matanovic A."/>
            <person name="Kerscher T."/>
            <person name="Rueschendorf F."/>
            <person name="Klein B."/>
            <person name="Berndt N."/>
            <person name="Zimmermann N."/>
            <person name="Flachmeier C."/>
            <person name="Thuss T."/>
            <person name="Lucas N."/>
            <person name="Marenholz I."/>
            <person name="Esparza-Gordillo J."/>
            <person name="Huebner N."/>
            <person name="Traupe H."/>
            <person name="Delaporte E."/>
            <person name="Lee Y.A."/>
        </authorList>
    </citation>
    <scope>INVOLVEMENT IN HRZ</scope>
    <scope>TISSUE SPECIFICITY</scope>
</reference>
<reference key="28">
    <citation type="journal article" date="2009" name="Anal. Chem.">
        <title>Lys-N and trypsin cover complementary parts of the phosphoproteome in a refined SCX-based approach.</title>
        <authorList>
            <person name="Gauci S."/>
            <person name="Helbig A.O."/>
            <person name="Slijper M."/>
            <person name="Krijgsveld J."/>
            <person name="Heck A.J."/>
            <person name="Mohammed S."/>
        </authorList>
    </citation>
    <scope>VARIANT [LARGE SCALE ANALYSIS] ALA-301</scope>
    <scope>IDENTIFICATION BY MASS SPECTROMETRY [LARGE SCALE ANALYSIS]</scope>
</reference>
<organism>
    <name type="scientific">Homo sapiens</name>
    <name type="common">Human</name>
    <dbReference type="NCBI Taxonomy" id="9606"/>
    <lineage>
        <taxon>Eukaryota</taxon>
        <taxon>Metazoa</taxon>
        <taxon>Chordata</taxon>
        <taxon>Craniata</taxon>
        <taxon>Vertebrata</taxon>
        <taxon>Euteleostomi</taxon>
        <taxon>Mammalia</taxon>
        <taxon>Eutheria</taxon>
        <taxon>Euarchontoglires</taxon>
        <taxon>Primates</taxon>
        <taxon>Haplorrhini</taxon>
        <taxon>Catarrhini</taxon>
        <taxon>Hominidae</taxon>
        <taxon>Homo</taxon>
    </lineage>
</organism>
<proteinExistence type="evidence at protein level"/>
<gene>
    <name evidence="24" type="primary">SMARCAD1</name>
    <name evidence="20" type="synonym">KIAA1122</name>
</gene>